<keyword id="KW-1015">Disulfide bond</keyword>
<keyword id="KW-0325">Glycoprotein</keyword>
<keyword id="KW-0378">Hydrolase</keyword>
<keyword id="KW-0443">Lipid metabolism</keyword>
<keyword id="KW-0458">Lysosome</keyword>
<keyword id="KW-1185">Reference proteome</keyword>
<keyword id="KW-0964">Secreted</keyword>
<keyword id="KW-0732">Signal</keyword>
<keyword id="KW-0746">Sphingolipid metabolism</keyword>
<keyword id="KW-0865">Zymogen</keyword>
<protein>
    <recommendedName>
        <fullName evidence="4">Acid ceramidase</fullName>
        <shortName>AC</shortName>
        <shortName>ACDase</shortName>
        <shortName>Acid CDase</shortName>
        <ecNumber evidence="2">3.5.1.23</ecNumber>
    </recommendedName>
    <alternativeName>
        <fullName>Acylsphingosine deacylase</fullName>
    </alternativeName>
    <alternativeName>
        <fullName evidence="2">N-acylethanolamine hydrolase ASAH1</fullName>
        <ecNumber evidence="2">3.5.1.-</ecNumber>
    </alternativeName>
    <alternativeName>
        <fullName>N-acylsphingosine amidohydrolase</fullName>
    </alternativeName>
    <component>
        <recommendedName>
            <fullName evidence="2">Acid ceramidase subunit alpha</fullName>
        </recommendedName>
    </component>
    <component>
        <recommendedName>
            <fullName evidence="2">Acid ceramidase subunit beta</fullName>
        </recommendedName>
    </component>
</protein>
<dbReference type="EC" id="3.5.1.23" evidence="2"/>
<dbReference type="EC" id="3.5.1.-" evidence="2"/>
<dbReference type="EMBL" id="AB222170">
    <property type="protein sequence ID" value="BAF62415.1"/>
    <property type="molecule type" value="mRNA"/>
</dbReference>
<dbReference type="RefSeq" id="NP_001092030.1">
    <property type="nucleotide sequence ID" value="NM_001098560.1"/>
</dbReference>
<dbReference type="SMR" id="A5A6P2"/>
<dbReference type="FunCoup" id="A5A6P2">
    <property type="interactions" value="885"/>
</dbReference>
<dbReference type="STRING" id="9598.ENSPTRP00000063559"/>
<dbReference type="MEROPS" id="C89.001"/>
<dbReference type="GlyCosmos" id="A5A6P2">
    <property type="glycosylation" value="4 sites, No reported glycans"/>
</dbReference>
<dbReference type="PaxDb" id="9598-ENSPTRP00000034295"/>
<dbReference type="Ensembl" id="ENSPTRT00000037110.4">
    <property type="protein sequence ID" value="ENSPTRP00000034295.3"/>
    <property type="gene ID" value="ENSPTRG00000020027.7"/>
</dbReference>
<dbReference type="GeneID" id="464022"/>
<dbReference type="KEGG" id="ptr:464022"/>
<dbReference type="CTD" id="427"/>
<dbReference type="VGNC" id="VGNC:53738">
    <property type="gene designation" value="ASAH1"/>
</dbReference>
<dbReference type="eggNOG" id="ENOG502QVBG">
    <property type="taxonomic scope" value="Eukaryota"/>
</dbReference>
<dbReference type="GeneTree" id="ENSGT00530000063548"/>
<dbReference type="HOGENOM" id="CLU_054401_0_0_1"/>
<dbReference type="InParanoid" id="A5A6P2"/>
<dbReference type="TreeFam" id="TF313219"/>
<dbReference type="UniPathway" id="UPA00222"/>
<dbReference type="Proteomes" id="UP000002277">
    <property type="component" value="Chromosome 8"/>
</dbReference>
<dbReference type="Bgee" id="ENSPTRG00000020027">
    <property type="expression patterns" value="Expressed in heart and 21 other cell types or tissues"/>
</dbReference>
<dbReference type="GO" id="GO:0005615">
    <property type="term" value="C:extracellular space"/>
    <property type="evidence" value="ECO:0000250"/>
    <property type="project" value="UniProtKB"/>
</dbReference>
<dbReference type="GO" id="GO:0005764">
    <property type="term" value="C:lysosome"/>
    <property type="evidence" value="ECO:0000250"/>
    <property type="project" value="UniProtKB"/>
</dbReference>
<dbReference type="GO" id="GO:0016020">
    <property type="term" value="C:membrane"/>
    <property type="evidence" value="ECO:0007669"/>
    <property type="project" value="GOC"/>
</dbReference>
<dbReference type="GO" id="GO:0017064">
    <property type="term" value="F:fatty acid amide hydrolase activity"/>
    <property type="evidence" value="ECO:0007669"/>
    <property type="project" value="InterPro"/>
</dbReference>
<dbReference type="GO" id="GO:0017040">
    <property type="term" value="F:N-acylsphingosine amidohydrolase activity"/>
    <property type="evidence" value="ECO:0000250"/>
    <property type="project" value="UniProtKB"/>
</dbReference>
<dbReference type="GO" id="GO:0071356">
    <property type="term" value="P:cellular response to tumor necrosis factor"/>
    <property type="evidence" value="ECO:0000250"/>
    <property type="project" value="UniProtKB"/>
</dbReference>
<dbReference type="GO" id="GO:0046513">
    <property type="term" value="P:ceramide biosynthetic process"/>
    <property type="evidence" value="ECO:0000250"/>
    <property type="project" value="UniProtKB"/>
</dbReference>
<dbReference type="GO" id="GO:0046514">
    <property type="term" value="P:ceramide catabolic process"/>
    <property type="evidence" value="ECO:0000250"/>
    <property type="project" value="UniProtKB"/>
</dbReference>
<dbReference type="GO" id="GO:0006631">
    <property type="term" value="P:fatty acid metabolic process"/>
    <property type="evidence" value="ECO:0007669"/>
    <property type="project" value="InterPro"/>
</dbReference>
<dbReference type="GO" id="GO:0030216">
    <property type="term" value="P:keratinocyte differentiation"/>
    <property type="evidence" value="ECO:0000250"/>
    <property type="project" value="UniProtKB"/>
</dbReference>
<dbReference type="GO" id="GO:0062098">
    <property type="term" value="P:regulation of programmed necrotic cell death"/>
    <property type="evidence" value="ECO:0000250"/>
    <property type="project" value="UniProtKB"/>
</dbReference>
<dbReference type="GO" id="GO:0050810">
    <property type="term" value="P:regulation of steroid biosynthetic process"/>
    <property type="evidence" value="ECO:0000250"/>
    <property type="project" value="UniProtKB"/>
</dbReference>
<dbReference type="GO" id="GO:0046512">
    <property type="term" value="P:sphingosine biosynthetic process"/>
    <property type="evidence" value="ECO:0000250"/>
    <property type="project" value="UniProtKB"/>
</dbReference>
<dbReference type="CDD" id="cd01903">
    <property type="entry name" value="Ntn_AC_NAAA"/>
    <property type="match status" value="1"/>
</dbReference>
<dbReference type="FunFam" id="3.60.60.10:FF:000002">
    <property type="entry name" value="N-acylsphingosine amidohydrolase 1"/>
    <property type="match status" value="1"/>
</dbReference>
<dbReference type="Gene3D" id="3.60.60.10">
    <property type="entry name" value="Penicillin V Acylase, Chain A"/>
    <property type="match status" value="1"/>
</dbReference>
<dbReference type="InterPro" id="IPR016699">
    <property type="entry name" value="Acid_ceramidase-like"/>
</dbReference>
<dbReference type="InterPro" id="IPR029130">
    <property type="entry name" value="Acid_ceramidase_N"/>
</dbReference>
<dbReference type="InterPro" id="IPR029132">
    <property type="entry name" value="CBAH/NAAA_C"/>
</dbReference>
<dbReference type="PANTHER" id="PTHR28583">
    <property type="entry name" value="ACID AMIDASE"/>
    <property type="match status" value="1"/>
</dbReference>
<dbReference type="PANTHER" id="PTHR28583:SF1">
    <property type="entry name" value="ACID CERAMIDASE"/>
    <property type="match status" value="1"/>
</dbReference>
<dbReference type="Pfam" id="PF02275">
    <property type="entry name" value="CBAH"/>
    <property type="match status" value="1"/>
</dbReference>
<dbReference type="Pfam" id="PF15508">
    <property type="entry name" value="NAAA-beta"/>
    <property type="match status" value="1"/>
</dbReference>
<dbReference type="PIRSF" id="PIRSF017632">
    <property type="entry name" value="Acid_ceramidase-like"/>
    <property type="match status" value="1"/>
</dbReference>
<sequence length="395" mass="44697">MPGRSRVALVLLAAAVSCAVAQHAPPWTEDCRKSTYPPSGPTYRGPVPWYTINLDLPPYKRWHELMLDKAPMLKVIVNSLKNMINTFVPSGKIVQVVDEKLPGLLGNFPGPFEEEMKGIAAVTDIPLGEIISFNIFYELFTICTSIVAEDKKGHLIHGRNMDFGVFLGWNINNDTWVITEQLKPLTVNLDFQRNNKTVFKASSFAGYVGMLTGFKPGLFSLSLNERFSINGGYLGILEWILGKKDAMWIGFLTRTVLENSTSYEEAKNLLTKTKILAPAYFILGGNQSGEGCVITRDRKESLDVYELDAKQGRWYVVQTNYDRWKHPFFLDDRRTPAKMCLNRTSQENISFETMYDVLSTKPVLNKLTVYTTLIDVTKGQFETYLRDCPDPCIGW</sequence>
<organism>
    <name type="scientific">Pan troglodytes</name>
    <name type="common">Chimpanzee</name>
    <dbReference type="NCBI Taxonomy" id="9598"/>
    <lineage>
        <taxon>Eukaryota</taxon>
        <taxon>Metazoa</taxon>
        <taxon>Chordata</taxon>
        <taxon>Craniata</taxon>
        <taxon>Vertebrata</taxon>
        <taxon>Euteleostomi</taxon>
        <taxon>Mammalia</taxon>
        <taxon>Eutheria</taxon>
        <taxon>Euarchontoglires</taxon>
        <taxon>Primates</taxon>
        <taxon>Haplorrhini</taxon>
        <taxon>Catarrhini</taxon>
        <taxon>Hominidae</taxon>
        <taxon>Pan</taxon>
    </lineage>
</organism>
<gene>
    <name evidence="2" type="primary">ASAH1</name>
</gene>
<evidence type="ECO:0000250" key="1">
    <source>
        <dbReference type="UniProtKB" id="A0A0P6JG37"/>
    </source>
</evidence>
<evidence type="ECO:0000250" key="2">
    <source>
        <dbReference type="UniProtKB" id="Q13510"/>
    </source>
</evidence>
<evidence type="ECO:0000255" key="3"/>
<evidence type="ECO:0000305" key="4"/>
<feature type="signal peptide" evidence="3">
    <location>
        <begin position="1"/>
        <end position="21"/>
    </location>
</feature>
<feature type="chain" id="PRO_0000378101" description="Acid ceramidase">
    <location>
        <begin position="22"/>
        <end position="395"/>
    </location>
</feature>
<feature type="chain" id="PRO_0000446282" description="Acid ceramidase subunit alpha" evidence="2">
    <location>
        <begin position="22"/>
        <end position="142"/>
    </location>
</feature>
<feature type="chain" id="PRO_0000446283" description="Acid ceramidase subunit beta" evidence="2">
    <location>
        <begin position="143"/>
        <end position="395"/>
    </location>
</feature>
<feature type="active site" description="Nucleophile" evidence="2">
    <location>
        <position position="143"/>
    </location>
</feature>
<feature type="site" description="Important for catalytic activity" evidence="2">
    <location>
        <position position="162"/>
    </location>
</feature>
<feature type="site" description="Important for catalytic activity" evidence="2">
    <location>
        <position position="320"/>
    </location>
</feature>
<feature type="site" description="Important for catalytic activity" evidence="2">
    <location>
        <position position="333"/>
    </location>
</feature>
<feature type="glycosylation site" description="N-linked (GlcNAc...) asparagine" evidence="3">
    <location>
        <position position="195"/>
    </location>
</feature>
<feature type="glycosylation site" description="N-linked (GlcNAc...) asparagine" evidence="3">
    <location>
        <position position="259"/>
    </location>
</feature>
<feature type="glycosylation site" description="N-linked (GlcNAc...) asparagine" evidence="3">
    <location>
        <position position="286"/>
    </location>
</feature>
<feature type="glycosylation site" description="N-linked (GlcNAc...) asparagine" evidence="3">
    <location>
        <position position="342"/>
    </location>
</feature>
<feature type="disulfide bond" description="Interchain (between alpha and beta subunits)" evidence="2">
    <location>
        <begin position="31"/>
        <end position="340"/>
    </location>
</feature>
<feature type="disulfide bond" evidence="1">
    <location>
        <begin position="388"/>
        <end position="392"/>
    </location>
</feature>
<name>ASAH1_PANTR</name>
<reference key="1">
    <citation type="journal article" date="2007" name="Gene">
        <title>Mapping of chimpanzee full-length cDNAs onto the human genome unveils large potential divergence of the transcriptome.</title>
        <authorList>
            <person name="Sakate R."/>
            <person name="Suto Y."/>
            <person name="Imanishi T."/>
            <person name="Tanoue T."/>
            <person name="Hida M."/>
            <person name="Hayasaka I."/>
            <person name="Kusuda J."/>
            <person name="Gojobori T."/>
            <person name="Hashimoto K."/>
            <person name="Hirai M."/>
        </authorList>
    </citation>
    <scope>NUCLEOTIDE SEQUENCE [MRNA]</scope>
    <source>
        <strain>Subsp. verus</strain>
        <tissue>Skin</tissue>
    </source>
</reference>
<comment type="function">
    <text evidence="2">Lysosomal ceramidase that hydrolyzes sphingolipid ceramides into sphingosine and free fatty acids at acidic pH (By similarity). Ceramides, sphingosine, and its phosphorylated form sphingosine-1-phosphate are bioactive lipids that mediate cellular signaling pathways regulating several biological processes including cell proliferation, apoptosis and differentiation (By similarity). Has a higher catalytic efficiency towards C12-ceramides versus other ceramides (By similarity). Also catalyzes the reverse reaction allowing the synthesis of ceramides from fatty acids and sphingosine (By similarity). For the reverse synthetic reaction, the natural sphingosine D-erythro isomer is more efficiently utilized as a substrate compared to D-erythro-dihydrosphingosine and D-erythro-phytosphingosine, while the fatty acids with chain lengths of 12 or 14 carbons are the most efficiently used (By similarity). Also has an N-acylethanolamine hydrolase activity (By similarity). By regulating the levels of ceramides, sphingosine and sphingosine-1-phosphate in the epidermis, mediates the calcium-induced differentiation of epidermal keratinocytes (By similarity). Also indirectly regulates tumor necrosis factor/TNF-induced apoptosis (By similarity). By regulating the intracellular balance between ceramides and sphingosine, in adrenocortical cells, probably also acts as a regulator of steroidogenesis (By similarity).</text>
</comment>
<comment type="catalytic activity">
    <reaction evidence="2">
        <text>an N-acylsphing-4-enine + H2O = sphing-4-enine + a fatty acid</text>
        <dbReference type="Rhea" id="RHEA:20856"/>
        <dbReference type="ChEBI" id="CHEBI:15377"/>
        <dbReference type="ChEBI" id="CHEBI:28868"/>
        <dbReference type="ChEBI" id="CHEBI:52639"/>
        <dbReference type="ChEBI" id="CHEBI:57756"/>
        <dbReference type="EC" id="3.5.1.23"/>
    </reaction>
</comment>
<comment type="catalytic activity">
    <reaction evidence="2">
        <text>N-dodecanoylsphing-4-enine + H2O = dodecanoate + sphing-4-enine</text>
        <dbReference type="Rhea" id="RHEA:41291"/>
        <dbReference type="ChEBI" id="CHEBI:15377"/>
        <dbReference type="ChEBI" id="CHEBI:18262"/>
        <dbReference type="ChEBI" id="CHEBI:57756"/>
        <dbReference type="ChEBI" id="CHEBI:72956"/>
    </reaction>
    <physiologicalReaction direction="left-to-right" evidence="2">
        <dbReference type="Rhea" id="RHEA:41292"/>
    </physiologicalReaction>
    <physiologicalReaction direction="right-to-left" evidence="2">
        <dbReference type="Rhea" id="RHEA:41293"/>
    </physiologicalReaction>
</comment>
<comment type="catalytic activity">
    <reaction evidence="2">
        <text>N-tetradecanoylsphing-4-enine + H2O = tetradecanoate + sphing-4-enine</text>
        <dbReference type="Rhea" id="RHEA:41287"/>
        <dbReference type="ChEBI" id="CHEBI:15377"/>
        <dbReference type="ChEBI" id="CHEBI:30807"/>
        <dbReference type="ChEBI" id="CHEBI:57756"/>
        <dbReference type="ChEBI" id="CHEBI:72957"/>
    </reaction>
    <physiologicalReaction direction="right-to-left" evidence="2">
        <dbReference type="Rhea" id="RHEA:41289"/>
    </physiologicalReaction>
</comment>
<comment type="catalytic activity">
    <reaction evidence="2">
        <text>N-hexadecanoylsphing-4-enine + H2O = sphing-4-enine + hexadecanoate</text>
        <dbReference type="Rhea" id="RHEA:38891"/>
        <dbReference type="ChEBI" id="CHEBI:7896"/>
        <dbReference type="ChEBI" id="CHEBI:15377"/>
        <dbReference type="ChEBI" id="CHEBI:57756"/>
        <dbReference type="ChEBI" id="CHEBI:72959"/>
    </reaction>
    <physiologicalReaction direction="left-to-right" evidence="2">
        <dbReference type="Rhea" id="RHEA:38892"/>
    </physiologicalReaction>
    <physiologicalReaction direction="right-to-left" evidence="2">
        <dbReference type="Rhea" id="RHEA:38893"/>
    </physiologicalReaction>
</comment>
<comment type="catalytic activity">
    <reaction evidence="2">
        <text>N-octadecanoylsphing-4-enine + H2O = sphing-4-enine + octadecanoate</text>
        <dbReference type="Rhea" id="RHEA:41279"/>
        <dbReference type="ChEBI" id="CHEBI:15377"/>
        <dbReference type="ChEBI" id="CHEBI:25629"/>
        <dbReference type="ChEBI" id="CHEBI:57756"/>
        <dbReference type="ChEBI" id="CHEBI:72961"/>
    </reaction>
    <physiologicalReaction direction="left-to-right" evidence="2">
        <dbReference type="Rhea" id="RHEA:41280"/>
    </physiologicalReaction>
    <physiologicalReaction direction="right-to-left" evidence="2">
        <dbReference type="Rhea" id="RHEA:41281"/>
    </physiologicalReaction>
</comment>
<comment type="catalytic activity">
    <reaction evidence="2">
        <text>N-dodecanoyl-(4R)-hydroxysphinganine + H2O = (4R)-hydroxysphinganine + dodecanoate</text>
        <dbReference type="Rhea" id="RHEA:41303"/>
        <dbReference type="ChEBI" id="CHEBI:15377"/>
        <dbReference type="ChEBI" id="CHEBI:18262"/>
        <dbReference type="ChEBI" id="CHEBI:64124"/>
        <dbReference type="ChEBI" id="CHEBI:78001"/>
    </reaction>
    <physiologicalReaction direction="right-to-left" evidence="2">
        <dbReference type="Rhea" id="RHEA:41305"/>
    </physiologicalReaction>
</comment>
<comment type="catalytic activity">
    <reaction evidence="2">
        <text>N-(dodecanoyl)-sphinganine + H2O = dodecanoate + sphinganine</text>
        <dbReference type="Rhea" id="RHEA:45448"/>
        <dbReference type="ChEBI" id="CHEBI:15377"/>
        <dbReference type="ChEBI" id="CHEBI:18262"/>
        <dbReference type="ChEBI" id="CHEBI:57817"/>
        <dbReference type="ChEBI" id="CHEBI:85261"/>
    </reaction>
    <physiologicalReaction direction="right-to-left" evidence="2">
        <dbReference type="Rhea" id="RHEA:45450"/>
    </physiologicalReaction>
</comment>
<comment type="catalytic activity">
    <reaction evidence="2">
        <text>N-(acetyl)-sphing-4-enine + H2O = sphing-4-enine + acetate</text>
        <dbReference type="Rhea" id="RHEA:58484"/>
        <dbReference type="ChEBI" id="CHEBI:15377"/>
        <dbReference type="ChEBI" id="CHEBI:30089"/>
        <dbReference type="ChEBI" id="CHEBI:46979"/>
        <dbReference type="ChEBI" id="CHEBI:57756"/>
    </reaction>
    <physiologicalReaction direction="left-to-right" evidence="2">
        <dbReference type="Rhea" id="RHEA:58485"/>
    </physiologicalReaction>
</comment>
<comment type="catalytic activity">
    <reaction evidence="2">
        <text>N-(hexanoyl)sphing-4-enine + H2O = hexanoate + sphing-4-enine</text>
        <dbReference type="Rhea" id="RHEA:41295"/>
        <dbReference type="ChEBI" id="CHEBI:15377"/>
        <dbReference type="ChEBI" id="CHEBI:17120"/>
        <dbReference type="ChEBI" id="CHEBI:57756"/>
        <dbReference type="ChEBI" id="CHEBI:63867"/>
    </reaction>
    <physiologicalReaction direction="left-to-right" evidence="2">
        <dbReference type="Rhea" id="RHEA:41296"/>
    </physiologicalReaction>
</comment>
<comment type="catalytic activity">
    <reaction evidence="2">
        <text>N-octanoylsphing-4-enine + H2O = octanoate + sphing-4-enine</text>
        <dbReference type="Rhea" id="RHEA:45092"/>
        <dbReference type="ChEBI" id="CHEBI:15377"/>
        <dbReference type="ChEBI" id="CHEBI:25646"/>
        <dbReference type="ChEBI" id="CHEBI:45815"/>
        <dbReference type="ChEBI" id="CHEBI:57756"/>
    </reaction>
    <physiologicalReaction direction="left-to-right" evidence="2">
        <dbReference type="Rhea" id="RHEA:45093"/>
    </physiologicalReaction>
</comment>
<comment type="catalytic activity">
    <reaction evidence="2">
        <text>N-(9Z-octadecenoyl)-sphing-4-enine + H2O = sphing-4-enine + (9Z)-octadecenoate</text>
        <dbReference type="Rhea" id="RHEA:41299"/>
        <dbReference type="ChEBI" id="CHEBI:15377"/>
        <dbReference type="ChEBI" id="CHEBI:30823"/>
        <dbReference type="ChEBI" id="CHEBI:57756"/>
        <dbReference type="ChEBI" id="CHEBI:77996"/>
    </reaction>
    <physiologicalReaction direction="left-to-right" evidence="2">
        <dbReference type="Rhea" id="RHEA:41300"/>
    </physiologicalReaction>
</comment>
<comment type="catalytic activity">
    <reaction evidence="2">
        <text>N-dodecanoylethanolamine + H2O = dodecanoate + ethanolamine</text>
        <dbReference type="Rhea" id="RHEA:45456"/>
        <dbReference type="ChEBI" id="CHEBI:15377"/>
        <dbReference type="ChEBI" id="CHEBI:18262"/>
        <dbReference type="ChEBI" id="CHEBI:57603"/>
        <dbReference type="ChEBI" id="CHEBI:85263"/>
    </reaction>
    <physiologicalReaction direction="left-to-right" evidence="2">
        <dbReference type="Rhea" id="RHEA:45457"/>
    </physiologicalReaction>
</comment>
<comment type="pathway">
    <text evidence="2">Lipid metabolism; sphingolipid metabolism.</text>
</comment>
<comment type="subunit">
    <text evidence="2">Heterodimer; disulfide-linked. The heterodimer is composed of the disulfide-linked alpha and beta chains produced by autocatalytic cleavage of the precursor.</text>
</comment>
<comment type="subcellular location">
    <subcellularLocation>
        <location evidence="2">Lysosome</location>
    </subcellularLocation>
    <subcellularLocation>
        <location evidence="2">Secreted</location>
    </subcellularLocation>
    <text evidence="2">Secretion is extremely low and localization to lysosomes is mannose-6-phosphate receptor-dependent.</text>
</comment>
<comment type="PTM">
    <text evidence="2">N-glycosylated.</text>
</comment>
<comment type="PTM">
    <text evidence="2">Proteolytically cleaved into two chains alpha and beta that remain associated via a disulfide bond. Cleavage gives rise to a conformation change that activates the enzyme. The same catalytic Cys residue mediates the autoproteolytic cleavage and subsequent hydrolysis of lipid substrates. The beta chain may undergo an additional C-terminal processing.</text>
</comment>
<comment type="similarity">
    <text evidence="4">Belongs to the acid ceramidase family.</text>
</comment>
<accession>A5A6P2</accession>
<proteinExistence type="evidence at transcript level"/>